<comment type="function">
    <text evidence="1">Part of the ABC transporter complex MetNIQ involved in methionine import. Responsible for energy coupling to the transport system.</text>
</comment>
<comment type="catalytic activity">
    <reaction evidence="1">
        <text>L-methionine(out) + ATP + H2O = L-methionine(in) + ADP + phosphate + H(+)</text>
        <dbReference type="Rhea" id="RHEA:29779"/>
        <dbReference type="ChEBI" id="CHEBI:15377"/>
        <dbReference type="ChEBI" id="CHEBI:15378"/>
        <dbReference type="ChEBI" id="CHEBI:30616"/>
        <dbReference type="ChEBI" id="CHEBI:43474"/>
        <dbReference type="ChEBI" id="CHEBI:57844"/>
        <dbReference type="ChEBI" id="CHEBI:456216"/>
        <dbReference type="EC" id="7.4.2.11"/>
    </reaction>
</comment>
<comment type="catalytic activity">
    <reaction evidence="1">
        <text>D-methionine(out) + ATP + H2O = D-methionine(in) + ADP + phosphate + H(+)</text>
        <dbReference type="Rhea" id="RHEA:29767"/>
        <dbReference type="ChEBI" id="CHEBI:15377"/>
        <dbReference type="ChEBI" id="CHEBI:15378"/>
        <dbReference type="ChEBI" id="CHEBI:30616"/>
        <dbReference type="ChEBI" id="CHEBI:43474"/>
        <dbReference type="ChEBI" id="CHEBI:57932"/>
        <dbReference type="ChEBI" id="CHEBI:456216"/>
        <dbReference type="EC" id="7.4.2.11"/>
    </reaction>
</comment>
<comment type="subunit">
    <text evidence="1">The complex is composed of two ATP-binding proteins (MetN), two transmembrane proteins (MetI) and a solute-binding protein (MetQ).</text>
</comment>
<comment type="subcellular location">
    <subcellularLocation>
        <location evidence="1">Cell inner membrane</location>
        <topology evidence="1">Peripheral membrane protein</topology>
    </subcellularLocation>
</comment>
<comment type="similarity">
    <text evidence="1">Belongs to the ABC transporter superfamily. Methionine importer (TC 3.A.1.24) family.</text>
</comment>
<sequence>MIQFQRLHKSYTVDGRQIVALHPLDLRIGPGEVFGIIGHSGAGKSTLIRLINRLEEPTGGRLLIGDEDVTALNSTGLRALRRRVGMIFQHFNLLSSRTVAGNVAFPLELAGTPRAEIDARVAELLARVGLEQHATKYPAQLSGGQKQRVGIARALATRPQILLCDEATSALDPQTTASVLQLLAQINRELGLTIVLITHEMEVIRRVCDRVAVLDAGKLVETGPVTEVFLHPQHPTTRRFVSEAEHVDEAELHRDFEAVGGRIVRLTFLGNGTYEPVLGRIARETGVDYNILSGRVDRIKDTPYGQLTVALTGGDQNAARAGFVAAGVHVEDLRV</sequence>
<reference key="1">
    <citation type="journal article" date="2005" name="Genome Res.">
        <title>Comparative and functional genomic analyses of the pathogenicity of phytopathogen Xanthomonas campestris pv. campestris.</title>
        <authorList>
            <person name="Qian W."/>
            <person name="Jia Y."/>
            <person name="Ren S.-X."/>
            <person name="He Y.-Q."/>
            <person name="Feng J.-X."/>
            <person name="Lu L.-F."/>
            <person name="Sun Q."/>
            <person name="Ying G."/>
            <person name="Tang D.-J."/>
            <person name="Tang H."/>
            <person name="Wu W."/>
            <person name="Hao P."/>
            <person name="Wang L."/>
            <person name="Jiang B.-L."/>
            <person name="Zeng S."/>
            <person name="Gu W.-Y."/>
            <person name="Lu G."/>
            <person name="Rong L."/>
            <person name="Tian Y."/>
            <person name="Yao Z."/>
            <person name="Fu G."/>
            <person name="Chen B."/>
            <person name="Fang R."/>
            <person name="Qiang B."/>
            <person name="Chen Z."/>
            <person name="Zhao G.-P."/>
            <person name="Tang J.-L."/>
            <person name="He C."/>
        </authorList>
    </citation>
    <scope>NUCLEOTIDE SEQUENCE [LARGE SCALE GENOMIC DNA]</scope>
    <source>
        <strain>8004</strain>
    </source>
</reference>
<proteinExistence type="inferred from homology"/>
<protein>
    <recommendedName>
        <fullName evidence="1">Methionine import ATP-binding protein MetN</fullName>
        <ecNumber evidence="1">7.4.2.11</ecNumber>
    </recommendedName>
</protein>
<accession>Q4UQD2</accession>
<name>METN_XANC8</name>
<keyword id="KW-0029">Amino-acid transport</keyword>
<keyword id="KW-0067">ATP-binding</keyword>
<keyword id="KW-0997">Cell inner membrane</keyword>
<keyword id="KW-1003">Cell membrane</keyword>
<keyword id="KW-0472">Membrane</keyword>
<keyword id="KW-0547">Nucleotide-binding</keyword>
<keyword id="KW-1278">Translocase</keyword>
<keyword id="KW-0813">Transport</keyword>
<dbReference type="EC" id="7.4.2.11" evidence="1"/>
<dbReference type="EMBL" id="CP000050">
    <property type="protein sequence ID" value="AAY50741.1"/>
    <property type="molecule type" value="Genomic_DNA"/>
</dbReference>
<dbReference type="RefSeq" id="WP_011038713.1">
    <property type="nucleotide sequence ID" value="NZ_CP155948.1"/>
</dbReference>
<dbReference type="SMR" id="Q4UQD2"/>
<dbReference type="KEGG" id="xcb:XC_3701"/>
<dbReference type="HOGENOM" id="CLU_000604_1_3_6"/>
<dbReference type="Proteomes" id="UP000000420">
    <property type="component" value="Chromosome"/>
</dbReference>
<dbReference type="GO" id="GO:0005886">
    <property type="term" value="C:plasma membrane"/>
    <property type="evidence" value="ECO:0007669"/>
    <property type="project" value="UniProtKB-SubCell"/>
</dbReference>
<dbReference type="GO" id="GO:0033232">
    <property type="term" value="F:ABC-type D-methionine transporter activity"/>
    <property type="evidence" value="ECO:0007669"/>
    <property type="project" value="UniProtKB-EC"/>
</dbReference>
<dbReference type="GO" id="GO:0005524">
    <property type="term" value="F:ATP binding"/>
    <property type="evidence" value="ECO:0007669"/>
    <property type="project" value="UniProtKB-KW"/>
</dbReference>
<dbReference type="GO" id="GO:0016887">
    <property type="term" value="F:ATP hydrolysis activity"/>
    <property type="evidence" value="ECO:0007669"/>
    <property type="project" value="InterPro"/>
</dbReference>
<dbReference type="CDD" id="cd03258">
    <property type="entry name" value="ABC_MetN_methionine_transporter"/>
    <property type="match status" value="1"/>
</dbReference>
<dbReference type="FunFam" id="3.40.50.300:FF:000056">
    <property type="entry name" value="Cell division ATP-binding protein FtsE"/>
    <property type="match status" value="1"/>
</dbReference>
<dbReference type="Gene3D" id="3.30.70.260">
    <property type="match status" value="1"/>
</dbReference>
<dbReference type="Gene3D" id="3.40.50.300">
    <property type="entry name" value="P-loop containing nucleotide triphosphate hydrolases"/>
    <property type="match status" value="1"/>
</dbReference>
<dbReference type="InterPro" id="IPR003593">
    <property type="entry name" value="AAA+_ATPase"/>
</dbReference>
<dbReference type="InterPro" id="IPR003439">
    <property type="entry name" value="ABC_transporter-like_ATP-bd"/>
</dbReference>
<dbReference type="InterPro" id="IPR017871">
    <property type="entry name" value="ABC_transporter-like_CS"/>
</dbReference>
<dbReference type="InterPro" id="IPR045865">
    <property type="entry name" value="ACT-like_dom_sf"/>
</dbReference>
<dbReference type="InterPro" id="IPR041701">
    <property type="entry name" value="MetN_ABC"/>
</dbReference>
<dbReference type="InterPro" id="IPR050086">
    <property type="entry name" value="MetN_ABC_transporter-like"/>
</dbReference>
<dbReference type="InterPro" id="IPR018449">
    <property type="entry name" value="NIL_domain"/>
</dbReference>
<dbReference type="InterPro" id="IPR027417">
    <property type="entry name" value="P-loop_NTPase"/>
</dbReference>
<dbReference type="PANTHER" id="PTHR43166">
    <property type="entry name" value="AMINO ACID IMPORT ATP-BINDING PROTEIN"/>
    <property type="match status" value="1"/>
</dbReference>
<dbReference type="PANTHER" id="PTHR43166:SF30">
    <property type="entry name" value="METHIONINE IMPORT ATP-BINDING PROTEIN METN"/>
    <property type="match status" value="1"/>
</dbReference>
<dbReference type="Pfam" id="PF00005">
    <property type="entry name" value="ABC_tran"/>
    <property type="match status" value="1"/>
</dbReference>
<dbReference type="Pfam" id="PF09383">
    <property type="entry name" value="NIL"/>
    <property type="match status" value="1"/>
</dbReference>
<dbReference type="SMART" id="SM00382">
    <property type="entry name" value="AAA"/>
    <property type="match status" value="1"/>
</dbReference>
<dbReference type="SMART" id="SM00930">
    <property type="entry name" value="NIL"/>
    <property type="match status" value="1"/>
</dbReference>
<dbReference type="SUPFAM" id="SSF55021">
    <property type="entry name" value="ACT-like"/>
    <property type="match status" value="1"/>
</dbReference>
<dbReference type="SUPFAM" id="SSF52540">
    <property type="entry name" value="P-loop containing nucleoside triphosphate hydrolases"/>
    <property type="match status" value="1"/>
</dbReference>
<dbReference type="PROSITE" id="PS00211">
    <property type="entry name" value="ABC_TRANSPORTER_1"/>
    <property type="match status" value="1"/>
</dbReference>
<dbReference type="PROSITE" id="PS50893">
    <property type="entry name" value="ABC_TRANSPORTER_2"/>
    <property type="match status" value="1"/>
</dbReference>
<dbReference type="PROSITE" id="PS51264">
    <property type="entry name" value="METN"/>
    <property type="match status" value="1"/>
</dbReference>
<feature type="chain" id="PRO_0000270441" description="Methionine import ATP-binding protein MetN">
    <location>
        <begin position="1"/>
        <end position="335"/>
    </location>
</feature>
<feature type="domain" description="ABC transporter" evidence="1">
    <location>
        <begin position="2"/>
        <end position="241"/>
    </location>
</feature>
<feature type="binding site" evidence="1">
    <location>
        <begin position="38"/>
        <end position="45"/>
    </location>
    <ligand>
        <name>ATP</name>
        <dbReference type="ChEBI" id="CHEBI:30616"/>
    </ligand>
</feature>
<organism>
    <name type="scientific">Xanthomonas campestris pv. campestris (strain 8004)</name>
    <dbReference type="NCBI Taxonomy" id="314565"/>
    <lineage>
        <taxon>Bacteria</taxon>
        <taxon>Pseudomonadati</taxon>
        <taxon>Pseudomonadota</taxon>
        <taxon>Gammaproteobacteria</taxon>
        <taxon>Lysobacterales</taxon>
        <taxon>Lysobacteraceae</taxon>
        <taxon>Xanthomonas</taxon>
    </lineage>
</organism>
<gene>
    <name evidence="1" type="primary">metN</name>
    <name type="ordered locus">XC_3701</name>
</gene>
<evidence type="ECO:0000255" key="1">
    <source>
        <dbReference type="HAMAP-Rule" id="MF_01719"/>
    </source>
</evidence>